<dbReference type="EC" id="2.8.1.13" evidence="1"/>
<dbReference type="EMBL" id="CP000962">
    <property type="protein sequence ID" value="ACA56151.1"/>
    <property type="molecule type" value="Genomic_DNA"/>
</dbReference>
<dbReference type="RefSeq" id="WP_012344050.1">
    <property type="nucleotide sequence ID" value="NC_010520.1"/>
</dbReference>
<dbReference type="SMR" id="B1KZE1"/>
<dbReference type="KEGG" id="cbl:CLK_0620"/>
<dbReference type="HOGENOM" id="CLU_035188_0_0_9"/>
<dbReference type="GO" id="GO:0005737">
    <property type="term" value="C:cytoplasm"/>
    <property type="evidence" value="ECO:0007669"/>
    <property type="project" value="UniProtKB-SubCell"/>
</dbReference>
<dbReference type="GO" id="GO:0005524">
    <property type="term" value="F:ATP binding"/>
    <property type="evidence" value="ECO:0007669"/>
    <property type="project" value="UniProtKB-KW"/>
</dbReference>
<dbReference type="GO" id="GO:0000049">
    <property type="term" value="F:tRNA binding"/>
    <property type="evidence" value="ECO:0007669"/>
    <property type="project" value="UniProtKB-KW"/>
</dbReference>
<dbReference type="GO" id="GO:0103016">
    <property type="term" value="F:tRNA-uridine 2-sulfurtransferase activity"/>
    <property type="evidence" value="ECO:0007669"/>
    <property type="project" value="UniProtKB-EC"/>
</dbReference>
<dbReference type="GO" id="GO:0002143">
    <property type="term" value="P:tRNA wobble position uridine thiolation"/>
    <property type="evidence" value="ECO:0007669"/>
    <property type="project" value="TreeGrafter"/>
</dbReference>
<dbReference type="CDD" id="cd01998">
    <property type="entry name" value="MnmA_TRMU-like"/>
    <property type="match status" value="1"/>
</dbReference>
<dbReference type="FunFam" id="2.30.30.280:FF:000001">
    <property type="entry name" value="tRNA-specific 2-thiouridylase MnmA"/>
    <property type="match status" value="1"/>
</dbReference>
<dbReference type="FunFam" id="2.40.30.10:FF:000023">
    <property type="entry name" value="tRNA-specific 2-thiouridylase MnmA"/>
    <property type="match status" value="1"/>
</dbReference>
<dbReference type="FunFam" id="3.40.50.620:FF:000115">
    <property type="entry name" value="tRNA-specific 2-thiouridylase MnmA"/>
    <property type="match status" value="1"/>
</dbReference>
<dbReference type="Gene3D" id="2.30.30.280">
    <property type="entry name" value="Adenine nucleotide alpha hydrolases-like domains"/>
    <property type="match status" value="1"/>
</dbReference>
<dbReference type="Gene3D" id="3.40.50.620">
    <property type="entry name" value="HUPs"/>
    <property type="match status" value="1"/>
</dbReference>
<dbReference type="Gene3D" id="2.40.30.10">
    <property type="entry name" value="Translation factors"/>
    <property type="match status" value="1"/>
</dbReference>
<dbReference type="HAMAP" id="MF_00144">
    <property type="entry name" value="tRNA_thiouridyl_MnmA"/>
    <property type="match status" value="1"/>
</dbReference>
<dbReference type="InterPro" id="IPR004506">
    <property type="entry name" value="MnmA-like"/>
</dbReference>
<dbReference type="InterPro" id="IPR046885">
    <property type="entry name" value="MnmA-like_C"/>
</dbReference>
<dbReference type="InterPro" id="IPR046884">
    <property type="entry name" value="MnmA-like_central"/>
</dbReference>
<dbReference type="InterPro" id="IPR023382">
    <property type="entry name" value="MnmA-like_central_sf"/>
</dbReference>
<dbReference type="InterPro" id="IPR014729">
    <property type="entry name" value="Rossmann-like_a/b/a_fold"/>
</dbReference>
<dbReference type="NCBIfam" id="NF001138">
    <property type="entry name" value="PRK00143.1"/>
    <property type="match status" value="1"/>
</dbReference>
<dbReference type="NCBIfam" id="TIGR00420">
    <property type="entry name" value="trmU"/>
    <property type="match status" value="1"/>
</dbReference>
<dbReference type="PANTHER" id="PTHR11933:SF5">
    <property type="entry name" value="MITOCHONDRIAL TRNA-SPECIFIC 2-THIOURIDYLASE 1"/>
    <property type="match status" value="1"/>
</dbReference>
<dbReference type="PANTHER" id="PTHR11933">
    <property type="entry name" value="TRNA 5-METHYLAMINOMETHYL-2-THIOURIDYLATE -METHYLTRANSFERASE"/>
    <property type="match status" value="1"/>
</dbReference>
<dbReference type="Pfam" id="PF03054">
    <property type="entry name" value="tRNA_Me_trans"/>
    <property type="match status" value="1"/>
</dbReference>
<dbReference type="Pfam" id="PF20258">
    <property type="entry name" value="tRNA_Me_trans_C"/>
    <property type="match status" value="1"/>
</dbReference>
<dbReference type="Pfam" id="PF20259">
    <property type="entry name" value="tRNA_Me_trans_M"/>
    <property type="match status" value="1"/>
</dbReference>
<dbReference type="SUPFAM" id="SSF52402">
    <property type="entry name" value="Adenine nucleotide alpha hydrolases-like"/>
    <property type="match status" value="1"/>
</dbReference>
<proteinExistence type="inferred from homology"/>
<evidence type="ECO:0000255" key="1">
    <source>
        <dbReference type="HAMAP-Rule" id="MF_00144"/>
    </source>
</evidence>
<accession>B1KZE1</accession>
<gene>
    <name evidence="1" type="primary">mnmA1</name>
    <name type="ordered locus">CLK_0620</name>
</gene>
<protein>
    <recommendedName>
        <fullName evidence="1">tRNA-specific 2-thiouridylase MnmA 1</fullName>
        <ecNumber evidence="1">2.8.1.13</ecNumber>
    </recommendedName>
</protein>
<organism>
    <name type="scientific">Clostridium botulinum (strain Loch Maree / Type A3)</name>
    <dbReference type="NCBI Taxonomy" id="498214"/>
    <lineage>
        <taxon>Bacteria</taxon>
        <taxon>Bacillati</taxon>
        <taxon>Bacillota</taxon>
        <taxon>Clostridia</taxon>
        <taxon>Eubacteriales</taxon>
        <taxon>Clostridiaceae</taxon>
        <taxon>Clostridium</taxon>
    </lineage>
</organism>
<keyword id="KW-0067">ATP-binding</keyword>
<keyword id="KW-0963">Cytoplasm</keyword>
<keyword id="KW-1015">Disulfide bond</keyword>
<keyword id="KW-0547">Nucleotide-binding</keyword>
<keyword id="KW-0694">RNA-binding</keyword>
<keyword id="KW-0808">Transferase</keyword>
<keyword id="KW-0819">tRNA processing</keyword>
<keyword id="KW-0820">tRNA-binding</keyword>
<sequence length="356" mass="40687">MKKKVLVGMSGGVDSSVAAYLLKEQGYEVIGVTMQIWQDDEEFIEKEGGCCSLSAVADARRVANKIGIPFYVMNFKDAFKRNVIDYFVDEYMEGRTPNPCITCNKFIKFSSFLDKAMAMGIDYVATGHYAIIEKHNDRYIIKKSEDDKKDQTYALYNLTQFQLERTLMPCGQYKKSKIREIAKEIGLRVHNKKDSEEICFIPDNDHGRYIKNRFPNKVREGNFVDKQGNVLGRHKGIVYYTIGQRKGLGIAFGKPMYVVDINPFRNEVVLGDLEDLLNTELIAKDINYIPFDTLKEPMEVEAKIRYSQTPSKAIITPIEDGRVRVNFQEKQRAITKGQSVVFYKDDLLIGGGIIEK</sequence>
<feature type="chain" id="PRO_0000349592" description="tRNA-specific 2-thiouridylase MnmA 1">
    <location>
        <begin position="1"/>
        <end position="356"/>
    </location>
</feature>
<feature type="region of interest" description="Interaction with tRNA" evidence="1">
    <location>
        <begin position="149"/>
        <end position="151"/>
    </location>
</feature>
<feature type="region of interest" description="Interaction with tRNA" evidence="1">
    <location>
        <begin position="305"/>
        <end position="306"/>
    </location>
</feature>
<feature type="active site" description="Nucleophile" evidence="1">
    <location>
        <position position="103"/>
    </location>
</feature>
<feature type="active site" description="Cysteine persulfide intermediate" evidence="1">
    <location>
        <position position="199"/>
    </location>
</feature>
<feature type="binding site" evidence="1">
    <location>
        <begin position="8"/>
        <end position="15"/>
    </location>
    <ligand>
        <name>ATP</name>
        <dbReference type="ChEBI" id="CHEBI:30616"/>
    </ligand>
</feature>
<feature type="binding site" evidence="1">
    <location>
        <position position="34"/>
    </location>
    <ligand>
        <name>ATP</name>
        <dbReference type="ChEBI" id="CHEBI:30616"/>
    </ligand>
</feature>
<feature type="binding site" evidence="1">
    <location>
        <position position="127"/>
    </location>
    <ligand>
        <name>ATP</name>
        <dbReference type="ChEBI" id="CHEBI:30616"/>
    </ligand>
</feature>
<feature type="site" description="Interaction with tRNA" evidence="1">
    <location>
        <position position="128"/>
    </location>
</feature>
<feature type="site" description="Interaction with tRNA" evidence="1">
    <location>
        <position position="338"/>
    </location>
</feature>
<feature type="disulfide bond" description="Alternate" evidence="1">
    <location>
        <begin position="103"/>
        <end position="199"/>
    </location>
</feature>
<reference key="1">
    <citation type="journal article" date="2007" name="PLoS ONE">
        <title>Analysis of the neurotoxin complex genes in Clostridium botulinum A1-A4 and B1 strains: BoNT/A3, /Ba4 and /B1 clusters are located within plasmids.</title>
        <authorList>
            <person name="Smith T.J."/>
            <person name="Hill K.K."/>
            <person name="Foley B.T."/>
            <person name="Detter J.C."/>
            <person name="Munk A.C."/>
            <person name="Bruce D.C."/>
            <person name="Doggett N.A."/>
            <person name="Smith L.A."/>
            <person name="Marks J.D."/>
            <person name="Xie G."/>
            <person name="Brettin T.S."/>
        </authorList>
    </citation>
    <scope>NUCLEOTIDE SEQUENCE [LARGE SCALE GENOMIC DNA]</scope>
    <source>
        <strain>Loch Maree / Type A3</strain>
    </source>
</reference>
<comment type="function">
    <text evidence="1">Catalyzes the 2-thiolation of uridine at the wobble position (U34) of tRNA, leading to the formation of s(2)U34.</text>
</comment>
<comment type="catalytic activity">
    <reaction evidence="1">
        <text>S-sulfanyl-L-cysteinyl-[protein] + uridine(34) in tRNA + AH2 + ATP = 2-thiouridine(34) in tRNA + L-cysteinyl-[protein] + A + AMP + diphosphate + H(+)</text>
        <dbReference type="Rhea" id="RHEA:47032"/>
        <dbReference type="Rhea" id="RHEA-COMP:10131"/>
        <dbReference type="Rhea" id="RHEA-COMP:11726"/>
        <dbReference type="Rhea" id="RHEA-COMP:11727"/>
        <dbReference type="Rhea" id="RHEA-COMP:11728"/>
        <dbReference type="ChEBI" id="CHEBI:13193"/>
        <dbReference type="ChEBI" id="CHEBI:15378"/>
        <dbReference type="ChEBI" id="CHEBI:17499"/>
        <dbReference type="ChEBI" id="CHEBI:29950"/>
        <dbReference type="ChEBI" id="CHEBI:30616"/>
        <dbReference type="ChEBI" id="CHEBI:33019"/>
        <dbReference type="ChEBI" id="CHEBI:61963"/>
        <dbReference type="ChEBI" id="CHEBI:65315"/>
        <dbReference type="ChEBI" id="CHEBI:87170"/>
        <dbReference type="ChEBI" id="CHEBI:456215"/>
        <dbReference type="EC" id="2.8.1.13"/>
    </reaction>
</comment>
<comment type="subcellular location">
    <subcellularLocation>
        <location evidence="1">Cytoplasm</location>
    </subcellularLocation>
</comment>
<comment type="similarity">
    <text evidence="1">Belongs to the MnmA/TRMU family.</text>
</comment>
<name>MNMA1_CLOBM</name>